<evidence type="ECO:0000255" key="1">
    <source>
        <dbReference type="HAMAP-Rule" id="MF_00405"/>
    </source>
</evidence>
<sequence>MTKQHAFTREDLLRCSRGELFGPGNAQLPAPNMLMIDRIVHISDVGGKYGKGELVAELDINPDLWFFACHFEGDPVMPGCLGLDAMWQLVGFYLGWQGNPGRGRALGSGEVKFFGQVLPTAKKVTYNIHIKRTINRSLVLAIADGTVSVDGREIYSAEGLRVGLFTSTDSF</sequence>
<protein>
    <recommendedName>
        <fullName evidence="1">3-hydroxydecanoyl-[acyl-carrier-protein] dehydratase</fullName>
        <ecNumber evidence="1">4.2.1.59</ecNumber>
    </recommendedName>
    <alternativeName>
        <fullName evidence="1">3-hydroxyacyl-[acyl-carrier-protein] dehydratase FabA</fullName>
    </alternativeName>
    <alternativeName>
        <fullName evidence="1">Beta-hydroxydecanoyl thioester dehydrase</fullName>
    </alternativeName>
    <alternativeName>
        <fullName evidence="1">Trans-2-decenoyl-[acyl-carrier-protein] isomerase</fullName>
        <ecNumber evidence="1">5.3.3.14</ecNumber>
    </alternativeName>
</protein>
<keyword id="KW-0963">Cytoplasm</keyword>
<keyword id="KW-0275">Fatty acid biosynthesis</keyword>
<keyword id="KW-0276">Fatty acid metabolism</keyword>
<keyword id="KW-0413">Isomerase</keyword>
<keyword id="KW-0444">Lipid biosynthesis</keyword>
<keyword id="KW-0443">Lipid metabolism</keyword>
<keyword id="KW-0456">Lyase</keyword>
<name>FABA_PSEP7</name>
<proteinExistence type="inferred from homology"/>
<feature type="chain" id="PRO_1000049828" description="3-hydroxydecanoyl-[acyl-carrier-protein] dehydratase">
    <location>
        <begin position="1"/>
        <end position="171"/>
    </location>
</feature>
<feature type="active site" evidence="1">
    <location>
        <position position="70"/>
    </location>
</feature>
<reference key="1">
    <citation type="submission" date="2007-06" db="EMBL/GenBank/DDBJ databases">
        <authorList>
            <person name="Dodson R.J."/>
            <person name="Harkins D."/>
            <person name="Paulsen I.T."/>
        </authorList>
    </citation>
    <scope>NUCLEOTIDE SEQUENCE [LARGE SCALE GENOMIC DNA]</scope>
    <source>
        <strain>DSM 24068 / PA7</strain>
    </source>
</reference>
<accession>A6V7I3</accession>
<dbReference type="EC" id="4.2.1.59" evidence="1"/>
<dbReference type="EC" id="5.3.3.14" evidence="1"/>
<dbReference type="EMBL" id="CP000744">
    <property type="protein sequence ID" value="ABR85460.1"/>
    <property type="molecule type" value="Genomic_DNA"/>
</dbReference>
<dbReference type="RefSeq" id="WP_003087475.1">
    <property type="nucleotide sequence ID" value="NC_009656.1"/>
</dbReference>
<dbReference type="SMR" id="A6V7I3"/>
<dbReference type="GeneID" id="77221769"/>
<dbReference type="KEGG" id="pap:PSPA7_3664"/>
<dbReference type="HOGENOM" id="CLU_097925_0_0_6"/>
<dbReference type="UniPathway" id="UPA00094"/>
<dbReference type="Proteomes" id="UP000001582">
    <property type="component" value="Chromosome"/>
</dbReference>
<dbReference type="GO" id="GO:0005737">
    <property type="term" value="C:cytoplasm"/>
    <property type="evidence" value="ECO:0007669"/>
    <property type="project" value="UniProtKB-SubCell"/>
</dbReference>
<dbReference type="GO" id="GO:0019171">
    <property type="term" value="F:(3R)-hydroxyacyl-[acyl-carrier-protein] dehydratase activity"/>
    <property type="evidence" value="ECO:0007669"/>
    <property type="project" value="UniProtKB-UniRule"/>
</dbReference>
<dbReference type="GO" id="GO:0034017">
    <property type="term" value="F:trans-2-decenoyl-acyl-carrier-protein isomerase activity"/>
    <property type="evidence" value="ECO:0007669"/>
    <property type="project" value="UniProtKB-UniRule"/>
</dbReference>
<dbReference type="GO" id="GO:0006636">
    <property type="term" value="P:unsaturated fatty acid biosynthetic process"/>
    <property type="evidence" value="ECO:0007669"/>
    <property type="project" value="UniProtKB-UniRule"/>
</dbReference>
<dbReference type="CDD" id="cd01287">
    <property type="entry name" value="FabA"/>
    <property type="match status" value="1"/>
</dbReference>
<dbReference type="FunFam" id="3.10.129.10:FF:000003">
    <property type="entry name" value="3-hydroxydecanoyl-[acyl-carrier-protein] dehydratase"/>
    <property type="match status" value="1"/>
</dbReference>
<dbReference type="Gene3D" id="3.10.129.10">
    <property type="entry name" value="Hotdog Thioesterase"/>
    <property type="match status" value="1"/>
</dbReference>
<dbReference type="HAMAP" id="MF_00405">
    <property type="entry name" value="FabA"/>
    <property type="match status" value="1"/>
</dbReference>
<dbReference type="InterPro" id="IPR010083">
    <property type="entry name" value="FabA"/>
</dbReference>
<dbReference type="InterPro" id="IPR013114">
    <property type="entry name" value="FabA_FabZ"/>
</dbReference>
<dbReference type="InterPro" id="IPR029069">
    <property type="entry name" value="HotDog_dom_sf"/>
</dbReference>
<dbReference type="NCBIfam" id="TIGR01749">
    <property type="entry name" value="fabA"/>
    <property type="match status" value="1"/>
</dbReference>
<dbReference type="NCBIfam" id="NF003509">
    <property type="entry name" value="PRK05174.1"/>
    <property type="match status" value="1"/>
</dbReference>
<dbReference type="PANTHER" id="PTHR30272">
    <property type="entry name" value="3-HYDROXYACYL-[ACYL-CARRIER-PROTEIN] DEHYDRATASE"/>
    <property type="match status" value="1"/>
</dbReference>
<dbReference type="PANTHER" id="PTHR30272:SF8">
    <property type="entry name" value="3-HYDROXYDECANOYL-[ACYL-CARRIER-PROTEIN] DEHYDRATASE"/>
    <property type="match status" value="1"/>
</dbReference>
<dbReference type="Pfam" id="PF07977">
    <property type="entry name" value="FabA"/>
    <property type="match status" value="1"/>
</dbReference>
<dbReference type="SUPFAM" id="SSF54637">
    <property type="entry name" value="Thioesterase/thiol ester dehydrase-isomerase"/>
    <property type="match status" value="1"/>
</dbReference>
<organism>
    <name type="scientific">Pseudomonas paraeruginosa (strain DSM 24068 / PA7)</name>
    <name type="common">Pseudomonas aeruginosa (strain PA7)</name>
    <dbReference type="NCBI Taxonomy" id="381754"/>
    <lineage>
        <taxon>Bacteria</taxon>
        <taxon>Pseudomonadati</taxon>
        <taxon>Pseudomonadota</taxon>
        <taxon>Gammaproteobacteria</taxon>
        <taxon>Pseudomonadales</taxon>
        <taxon>Pseudomonadaceae</taxon>
        <taxon>Pseudomonas</taxon>
        <taxon>Pseudomonas paraeruginosa</taxon>
    </lineage>
</organism>
<comment type="function">
    <text evidence="1">Necessary for the introduction of cis unsaturation into fatty acids. Catalyzes the dehydration of (3R)-3-hydroxydecanoyl-ACP to E-(2)-decenoyl-ACP and then its isomerization to Z-(3)-decenoyl-ACP. Can catalyze the dehydratase reaction for beta-hydroxyacyl-ACPs with saturated chain lengths up to 16:0, being most active on intermediate chain length.</text>
</comment>
<comment type="catalytic activity">
    <reaction evidence="1">
        <text>a (3R)-hydroxyacyl-[ACP] = a (2E)-enoyl-[ACP] + H2O</text>
        <dbReference type="Rhea" id="RHEA:13097"/>
        <dbReference type="Rhea" id="RHEA-COMP:9925"/>
        <dbReference type="Rhea" id="RHEA-COMP:9945"/>
        <dbReference type="ChEBI" id="CHEBI:15377"/>
        <dbReference type="ChEBI" id="CHEBI:78784"/>
        <dbReference type="ChEBI" id="CHEBI:78827"/>
        <dbReference type="EC" id="4.2.1.59"/>
    </reaction>
</comment>
<comment type="catalytic activity">
    <reaction evidence="1">
        <text>(3R)-hydroxydecanoyl-[ACP] = (2E)-decenoyl-[ACP] + H2O</text>
        <dbReference type="Rhea" id="RHEA:41860"/>
        <dbReference type="Rhea" id="RHEA-COMP:9638"/>
        <dbReference type="Rhea" id="RHEA-COMP:9639"/>
        <dbReference type="ChEBI" id="CHEBI:15377"/>
        <dbReference type="ChEBI" id="CHEBI:78466"/>
        <dbReference type="ChEBI" id="CHEBI:78467"/>
    </reaction>
</comment>
<comment type="catalytic activity">
    <reaction evidence="1">
        <text>(2E)-decenoyl-[ACP] = (3Z)-decenoyl-[ACP]</text>
        <dbReference type="Rhea" id="RHEA:23568"/>
        <dbReference type="Rhea" id="RHEA-COMP:9639"/>
        <dbReference type="Rhea" id="RHEA-COMP:9927"/>
        <dbReference type="ChEBI" id="CHEBI:78467"/>
        <dbReference type="ChEBI" id="CHEBI:78798"/>
        <dbReference type="EC" id="5.3.3.14"/>
    </reaction>
</comment>
<comment type="pathway">
    <text evidence="1">Lipid metabolism; fatty acid biosynthesis.</text>
</comment>
<comment type="subunit">
    <text evidence="1">Homodimer.</text>
</comment>
<comment type="subcellular location">
    <subcellularLocation>
        <location evidence="1">Cytoplasm</location>
    </subcellularLocation>
</comment>
<comment type="similarity">
    <text evidence="1">Belongs to the thioester dehydratase family. FabA subfamily.</text>
</comment>
<gene>
    <name evidence="1" type="primary">fabA</name>
    <name type="ordered locus">PSPA7_3664</name>
</gene>